<sequence>MTAFRMVWSMLLASLLMLLVASSTAPADALSPPAAGLGADHSFTKRSLFDPSCTGVFDRQLLRRLSRVCDDCFNVFREPNVATECRSNCYNNEVFRQCMEYLLPAHLHEEHRLAVQMVGK</sequence>
<name>CHH1_PENMO</name>
<protein>
    <recommendedName>
        <fullName>Crustacean hyperglycemic hormones 1</fullName>
    </recommendedName>
    <alternativeName>
        <fullName>Pm-SGP-I</fullName>
    </alternativeName>
    <component>
        <recommendedName>
            <fullName>CHH precursor-related peptide 1</fullName>
            <shortName>CPRP 1</shortName>
        </recommendedName>
    </component>
    <component>
        <recommendedName>
            <fullName>Crustacean hyperglycemic hormone 1</fullName>
            <shortName>CHH 1</shortName>
        </recommendedName>
    </component>
</protein>
<organism>
    <name type="scientific">Penaeus monodon</name>
    <name type="common">Giant tiger prawn</name>
    <dbReference type="NCBI Taxonomy" id="6687"/>
    <lineage>
        <taxon>Eukaryota</taxon>
        <taxon>Metazoa</taxon>
        <taxon>Ecdysozoa</taxon>
        <taxon>Arthropoda</taxon>
        <taxon>Crustacea</taxon>
        <taxon>Multicrustacea</taxon>
        <taxon>Malacostraca</taxon>
        <taxon>Eumalacostraca</taxon>
        <taxon>Eucarida</taxon>
        <taxon>Decapoda</taxon>
        <taxon>Dendrobranchiata</taxon>
        <taxon>Penaeoidea</taxon>
        <taxon>Penaeidae</taxon>
        <taxon>Penaeus</taxon>
    </lineage>
</organism>
<proteinExistence type="evidence at transcript level"/>
<reference key="1">
    <citation type="journal article" date="2000" name="Mar. Biotechnol.">
        <title>Five crustacean hyperglycemic family hormones of Penaeus monodon: complementary DNA sequence and identification in single sinus glands by electrospray ionization-Fourier transform mass spectrometry.</title>
        <authorList>
            <person name="Davey M.L."/>
            <person name="Hall M.R."/>
            <person name="Willis R.H."/>
            <person name="Oliver R.W.A."/>
            <person name="Thurn M.J."/>
            <person name="Wilson K.J."/>
        </authorList>
    </citation>
    <scope>NUCLEOTIDE SEQUENCE [MRNA]</scope>
    <source>
        <tissue>Eyestalk</tissue>
    </source>
</reference>
<keyword id="KW-0027">Amidation</keyword>
<keyword id="KW-0119">Carbohydrate metabolism</keyword>
<keyword id="KW-0165">Cleavage on pair of basic residues</keyword>
<keyword id="KW-1015">Disulfide bond</keyword>
<keyword id="KW-0313">Glucose metabolism</keyword>
<keyword id="KW-0372">Hormone</keyword>
<keyword id="KW-0527">Neuropeptide</keyword>
<keyword id="KW-0964">Secreted</keyword>
<keyword id="KW-0732">Signal</keyword>
<gene>
    <name type="primary">CHH1</name>
</gene>
<accession>O97383</accession>
<evidence type="ECO:0000250" key="1"/>
<evidence type="ECO:0000255" key="2"/>
<evidence type="ECO:0000305" key="3"/>
<feature type="signal peptide" evidence="2">
    <location>
        <begin position="1"/>
        <end position="27"/>
    </location>
</feature>
<feature type="peptide" id="PRO_0000019061" description="CHH precursor-related peptide 1">
    <location>
        <begin position="28"/>
        <end position="44"/>
    </location>
</feature>
<feature type="peptide" id="PRO_0000019062" description="Crustacean hyperglycemic hormone 1">
    <location>
        <begin position="47"/>
        <end position="118"/>
    </location>
</feature>
<feature type="modified residue" description="Valine amide" evidence="1">
    <location>
        <position position="118"/>
    </location>
</feature>
<feature type="disulfide bond" evidence="1">
    <location>
        <begin position="53"/>
        <end position="89"/>
    </location>
</feature>
<feature type="disulfide bond" evidence="1">
    <location>
        <begin position="69"/>
        <end position="85"/>
    </location>
</feature>
<feature type="disulfide bond" evidence="1">
    <location>
        <begin position="72"/>
        <end position="98"/>
    </location>
</feature>
<comment type="function">
    <text evidence="1">Hormone found in the sinus gland of isopods and decapods which controls the blood sugar level. Has a secretagogue action over the amylase released from the midgut gland. May act as a stress hormone and may be involved in the control of molting and reproduction (By similarity).</text>
</comment>
<comment type="subcellular location">
    <subcellularLocation>
        <location>Secreted</location>
    </subcellularLocation>
</comment>
<comment type="similarity">
    <text evidence="3">Belongs to the arthropod CHH/MIH/GIH/VIH hormone family.</text>
</comment>
<dbReference type="EMBL" id="AF104386">
    <property type="protein sequence ID" value="AAC84142.1"/>
    <property type="molecule type" value="mRNA"/>
</dbReference>
<dbReference type="SMR" id="O97383"/>
<dbReference type="EnsemblMetazoa" id="XM_037932342.1">
    <property type="protein sequence ID" value="XP_037788270.1"/>
    <property type="gene ID" value="LOC119583703"/>
</dbReference>
<dbReference type="OrthoDB" id="6330469at2759"/>
<dbReference type="GO" id="GO:0005576">
    <property type="term" value="C:extracellular region"/>
    <property type="evidence" value="ECO:0007669"/>
    <property type="project" value="UniProtKB-SubCell"/>
</dbReference>
<dbReference type="GO" id="GO:0005184">
    <property type="term" value="F:neuropeptide hormone activity"/>
    <property type="evidence" value="ECO:0007669"/>
    <property type="project" value="InterPro"/>
</dbReference>
<dbReference type="GO" id="GO:0007623">
    <property type="term" value="P:circadian rhythm"/>
    <property type="evidence" value="ECO:0007669"/>
    <property type="project" value="TreeGrafter"/>
</dbReference>
<dbReference type="GO" id="GO:0006006">
    <property type="term" value="P:glucose metabolic process"/>
    <property type="evidence" value="ECO:0007669"/>
    <property type="project" value="UniProtKB-KW"/>
</dbReference>
<dbReference type="GO" id="GO:0007218">
    <property type="term" value="P:neuropeptide signaling pathway"/>
    <property type="evidence" value="ECO:0007669"/>
    <property type="project" value="UniProtKB-KW"/>
</dbReference>
<dbReference type="Gene3D" id="1.10.2010.10">
    <property type="entry name" value="Crustacean CHH/MIH/GIH neurohormone"/>
    <property type="match status" value="1"/>
</dbReference>
<dbReference type="InterPro" id="IPR018251">
    <property type="entry name" value="Crust_neurhormone_CS"/>
</dbReference>
<dbReference type="InterPro" id="IPR031098">
    <property type="entry name" value="Crust_neurohorm"/>
</dbReference>
<dbReference type="InterPro" id="IPR035957">
    <property type="entry name" value="Crust_neurohorm_sf"/>
</dbReference>
<dbReference type="InterPro" id="IPR001166">
    <property type="entry name" value="Hyperglycemic"/>
</dbReference>
<dbReference type="InterPro" id="IPR000346">
    <property type="entry name" value="Hyperglycemic1"/>
</dbReference>
<dbReference type="PANTHER" id="PTHR35981">
    <property type="entry name" value="ION TRANSPORT PEPTIDE, ISOFORM C"/>
    <property type="match status" value="1"/>
</dbReference>
<dbReference type="PANTHER" id="PTHR35981:SF2">
    <property type="entry name" value="ION TRANSPORT PEPTIDE, ISOFORM C"/>
    <property type="match status" value="1"/>
</dbReference>
<dbReference type="Pfam" id="PF01147">
    <property type="entry name" value="Crust_neurohorm"/>
    <property type="match status" value="1"/>
</dbReference>
<dbReference type="PRINTS" id="PR00548">
    <property type="entry name" value="HYPRGLYCEMC1"/>
</dbReference>
<dbReference type="PRINTS" id="PR00550">
    <property type="entry name" value="HYPRGLYCEMIC"/>
</dbReference>
<dbReference type="SUPFAM" id="SSF81778">
    <property type="entry name" value="Crustacean CHH/MIH/GIH neurohormone"/>
    <property type="match status" value="1"/>
</dbReference>
<dbReference type="PROSITE" id="PS01250">
    <property type="entry name" value="CHH_MIH_GIH"/>
    <property type="match status" value="1"/>
</dbReference>